<protein>
    <recommendedName>
        <fullName evidence="1">Iron-binding protein IscA</fullName>
    </recommendedName>
    <alternativeName>
        <fullName evidence="1">Iron-sulfur cluster assembly protein</fullName>
    </alternativeName>
</protein>
<organism>
    <name type="scientific">Enterobacter sp. (strain 638)</name>
    <dbReference type="NCBI Taxonomy" id="399742"/>
    <lineage>
        <taxon>Bacteria</taxon>
        <taxon>Pseudomonadati</taxon>
        <taxon>Pseudomonadota</taxon>
        <taxon>Gammaproteobacteria</taxon>
        <taxon>Enterobacterales</taxon>
        <taxon>Enterobacteriaceae</taxon>
        <taxon>Enterobacter</taxon>
    </lineage>
</organism>
<evidence type="ECO:0000255" key="1">
    <source>
        <dbReference type="HAMAP-Rule" id="MF_01429"/>
    </source>
</evidence>
<keyword id="KW-0408">Iron</keyword>
<keyword id="KW-0479">Metal-binding</keyword>
<feature type="chain" id="PRO_1000068520" description="Iron-binding protein IscA">
    <location>
        <begin position="1"/>
        <end position="107"/>
    </location>
</feature>
<feature type="binding site" evidence="1">
    <location>
        <position position="35"/>
    </location>
    <ligand>
        <name>Fe cation</name>
        <dbReference type="ChEBI" id="CHEBI:24875"/>
    </ligand>
</feature>
<feature type="binding site" evidence="1">
    <location>
        <position position="99"/>
    </location>
    <ligand>
        <name>Fe cation</name>
        <dbReference type="ChEBI" id="CHEBI:24875"/>
    </ligand>
</feature>
<feature type="binding site" evidence="1">
    <location>
        <position position="101"/>
    </location>
    <ligand>
        <name>Fe cation</name>
        <dbReference type="ChEBI" id="CHEBI:24875"/>
    </ligand>
</feature>
<comment type="function">
    <text evidence="1">Is able to transfer iron-sulfur clusters to apo-ferredoxin. Multiple cycles of [2Fe2S] cluster formation and transfer are observed, suggesting that IscA acts catalytically. Recruits intracellular free iron so as to provide iron for the assembly of transient iron-sulfur cluster in IscU in the presence of IscS, L-cysteine and the thioredoxin reductase system TrxA/TrxB.</text>
</comment>
<comment type="cofactor">
    <cofactor evidence="1">
        <name>Fe cation</name>
        <dbReference type="ChEBI" id="CHEBI:24875"/>
    </cofactor>
    <text evidence="1">Binds 2 iron ions per dimer. The dimer may bind additional iron ions.</text>
</comment>
<comment type="subunit">
    <text evidence="1">Homodimer; may form tetramers and higher multimers.</text>
</comment>
<comment type="similarity">
    <text evidence="1">Belongs to the HesB/IscA family.</text>
</comment>
<dbReference type="EMBL" id="CP000653">
    <property type="protein sequence ID" value="ABP61689.1"/>
    <property type="molecule type" value="Genomic_DNA"/>
</dbReference>
<dbReference type="RefSeq" id="WP_015960021.1">
    <property type="nucleotide sequence ID" value="NC_009436.1"/>
</dbReference>
<dbReference type="SMR" id="A4WDA9"/>
<dbReference type="STRING" id="399742.Ent638_3025"/>
<dbReference type="GeneID" id="93305966"/>
<dbReference type="KEGG" id="ent:Ent638_3025"/>
<dbReference type="eggNOG" id="COG0316">
    <property type="taxonomic scope" value="Bacteria"/>
</dbReference>
<dbReference type="HOGENOM" id="CLU_069054_5_1_6"/>
<dbReference type="OrthoDB" id="9801228at2"/>
<dbReference type="Proteomes" id="UP000000230">
    <property type="component" value="Chromosome"/>
</dbReference>
<dbReference type="GO" id="GO:0005829">
    <property type="term" value="C:cytosol"/>
    <property type="evidence" value="ECO:0007669"/>
    <property type="project" value="TreeGrafter"/>
</dbReference>
<dbReference type="GO" id="GO:0051537">
    <property type="term" value="F:2 iron, 2 sulfur cluster binding"/>
    <property type="evidence" value="ECO:0007669"/>
    <property type="project" value="TreeGrafter"/>
</dbReference>
<dbReference type="GO" id="GO:0005506">
    <property type="term" value="F:iron ion binding"/>
    <property type="evidence" value="ECO:0007669"/>
    <property type="project" value="UniProtKB-UniRule"/>
</dbReference>
<dbReference type="GO" id="GO:0016226">
    <property type="term" value="P:iron-sulfur cluster assembly"/>
    <property type="evidence" value="ECO:0007669"/>
    <property type="project" value="UniProtKB-UniRule"/>
</dbReference>
<dbReference type="FunFam" id="2.60.300.12:FF:000001">
    <property type="entry name" value="Iron-binding protein IscA"/>
    <property type="match status" value="1"/>
</dbReference>
<dbReference type="Gene3D" id="2.60.300.12">
    <property type="entry name" value="HesB-like domain"/>
    <property type="match status" value="1"/>
</dbReference>
<dbReference type="HAMAP" id="MF_01429">
    <property type="entry name" value="Fe_S_insert_IscA"/>
    <property type="match status" value="1"/>
</dbReference>
<dbReference type="InterPro" id="IPR050322">
    <property type="entry name" value="Fe-S_cluster_asmbl/transfer"/>
</dbReference>
<dbReference type="InterPro" id="IPR000361">
    <property type="entry name" value="FeS_biogenesis"/>
</dbReference>
<dbReference type="InterPro" id="IPR016092">
    <property type="entry name" value="FeS_cluster_insertion"/>
</dbReference>
<dbReference type="InterPro" id="IPR017870">
    <property type="entry name" value="FeS_cluster_insertion_CS"/>
</dbReference>
<dbReference type="InterPro" id="IPR035903">
    <property type="entry name" value="HesB-like_dom_sf"/>
</dbReference>
<dbReference type="InterPro" id="IPR011302">
    <property type="entry name" value="IscA_proteobacteria"/>
</dbReference>
<dbReference type="NCBIfam" id="TIGR00049">
    <property type="entry name" value="iron-sulfur cluster assembly accessory protein"/>
    <property type="match status" value="1"/>
</dbReference>
<dbReference type="NCBIfam" id="TIGR02011">
    <property type="entry name" value="IscA"/>
    <property type="match status" value="1"/>
</dbReference>
<dbReference type="NCBIfam" id="NF007049">
    <property type="entry name" value="PRK09502.1"/>
    <property type="match status" value="1"/>
</dbReference>
<dbReference type="PANTHER" id="PTHR10072:SF41">
    <property type="entry name" value="IRON-SULFUR CLUSTER ASSEMBLY 1 HOMOLOG, MITOCHONDRIAL"/>
    <property type="match status" value="1"/>
</dbReference>
<dbReference type="PANTHER" id="PTHR10072">
    <property type="entry name" value="IRON-SULFUR CLUSTER ASSEMBLY PROTEIN"/>
    <property type="match status" value="1"/>
</dbReference>
<dbReference type="Pfam" id="PF01521">
    <property type="entry name" value="Fe-S_biosyn"/>
    <property type="match status" value="1"/>
</dbReference>
<dbReference type="SUPFAM" id="SSF89360">
    <property type="entry name" value="HesB-like domain"/>
    <property type="match status" value="1"/>
</dbReference>
<dbReference type="PROSITE" id="PS01152">
    <property type="entry name" value="HESB"/>
    <property type="match status" value="1"/>
</dbReference>
<sequence>MSITLSDSAAARVSSFLENRGKGYGLRLGVRTSGCSGMAYVLEFVDEPATDDTVFEDKGVKVVIDGKSLQFLDGTQLDFVKEGLNEGFKFTNPNVKDECGCGESFHV</sequence>
<reference key="1">
    <citation type="journal article" date="2010" name="PLoS Genet.">
        <title>Genome sequence of the plant growth promoting endophytic bacterium Enterobacter sp. 638.</title>
        <authorList>
            <person name="Taghavi S."/>
            <person name="van der Lelie D."/>
            <person name="Hoffman A."/>
            <person name="Zhang Y.B."/>
            <person name="Walla M.D."/>
            <person name="Vangronsveld J."/>
            <person name="Newman L."/>
            <person name="Monchy S."/>
        </authorList>
    </citation>
    <scope>NUCLEOTIDE SEQUENCE [LARGE SCALE GENOMIC DNA]</scope>
    <source>
        <strain>638</strain>
    </source>
</reference>
<name>ISCA_ENT38</name>
<gene>
    <name evidence="1" type="primary">iscA</name>
    <name type="ordered locus">Ent638_3025</name>
</gene>
<proteinExistence type="inferred from homology"/>
<accession>A4WDA9</accession>